<reference key="1">
    <citation type="journal article" date="2002" name="Proc. Natl. Acad. Sci. U.S.A.">
        <title>Complete genome sequence and comparative genomic analysis of an emerging human pathogen, serotype V Streptococcus agalactiae.</title>
        <authorList>
            <person name="Tettelin H."/>
            <person name="Masignani V."/>
            <person name="Cieslewicz M.J."/>
            <person name="Eisen J.A."/>
            <person name="Peterson S.N."/>
            <person name="Wessels M.R."/>
            <person name="Paulsen I.T."/>
            <person name="Nelson K.E."/>
            <person name="Margarit I."/>
            <person name="Read T.D."/>
            <person name="Madoff L.C."/>
            <person name="Wolf A.M."/>
            <person name="Beanan M.J."/>
            <person name="Brinkac L.M."/>
            <person name="Daugherty S.C."/>
            <person name="DeBoy R.T."/>
            <person name="Durkin A.S."/>
            <person name="Kolonay J.F."/>
            <person name="Madupu R."/>
            <person name="Lewis M.R."/>
            <person name="Radune D."/>
            <person name="Fedorova N.B."/>
            <person name="Scanlan D."/>
            <person name="Khouri H.M."/>
            <person name="Mulligan S."/>
            <person name="Carty H.A."/>
            <person name="Cline R.T."/>
            <person name="Van Aken S.E."/>
            <person name="Gill J."/>
            <person name="Scarselli M."/>
            <person name="Mora M."/>
            <person name="Iacobini E.T."/>
            <person name="Brettoni C."/>
            <person name="Galli G."/>
            <person name="Mariani M."/>
            <person name="Vegni F."/>
            <person name="Maione D."/>
            <person name="Rinaudo D."/>
            <person name="Rappuoli R."/>
            <person name="Telford J.L."/>
            <person name="Kasper D.L."/>
            <person name="Grandi G."/>
            <person name="Fraser C.M."/>
        </authorList>
    </citation>
    <scope>NUCLEOTIDE SEQUENCE [LARGE SCALE GENOMIC DNA]</scope>
    <source>
        <strain>ATCC BAA-611 / 2603 V/R</strain>
    </source>
</reference>
<accession>Q8DZH0</accession>
<comment type="function">
    <text evidence="1">Thiol-specific peroxidase that catalyzes the reduction of hydrogen peroxide and organic hydroperoxides to water and alcohols, respectively. Plays a role in cell protection against oxidative stress by detoxifying peroxides.</text>
</comment>
<comment type="catalytic activity">
    <reaction evidence="1">
        <text>a hydroperoxide + [thioredoxin]-dithiol = an alcohol + [thioredoxin]-disulfide + H2O</text>
        <dbReference type="Rhea" id="RHEA:62620"/>
        <dbReference type="Rhea" id="RHEA-COMP:10698"/>
        <dbReference type="Rhea" id="RHEA-COMP:10700"/>
        <dbReference type="ChEBI" id="CHEBI:15377"/>
        <dbReference type="ChEBI" id="CHEBI:29950"/>
        <dbReference type="ChEBI" id="CHEBI:30879"/>
        <dbReference type="ChEBI" id="CHEBI:35924"/>
        <dbReference type="ChEBI" id="CHEBI:50058"/>
        <dbReference type="EC" id="1.11.1.24"/>
    </reaction>
</comment>
<comment type="subunit">
    <text evidence="1">Homodimer.</text>
</comment>
<comment type="miscellaneous">
    <text evidence="1">The active site is a conserved redox-active cysteine residue, the peroxidatic cysteine (C(P)), which makes the nucleophilic attack on the peroxide substrate. The peroxide oxidizes the C(P)-SH to cysteine sulfenic acid (C(P)-SOH), which then reacts with another cysteine residue, the resolving cysteine (C(R)), to form a disulfide bridge. The disulfide is subsequently reduced by an appropriate electron donor to complete the catalytic cycle. In this atypical 2-Cys peroxiredoxin, C(R) is present in the same subunit to form an intramolecular disulfide. The disulfide is subsequently reduced by thioredoxin.</text>
</comment>
<comment type="similarity">
    <text evidence="1">Belongs to the peroxiredoxin family. Tpx subfamily.</text>
</comment>
<proteinExistence type="inferred from homology"/>
<sequence length="164" mass="18412">MTTFLGNPVTFTGKQLQVGDIAKDFLLIATDLSQKSLKDFEGKKKVISVVPSIDTGICSKQTRTFNEELSELDNTVVITVSMDLPFAQKRWCSAEGLDNVILLSDFYDHSFGQEYALLMNEWHLLTRAVLILDEHNKVTYTEYVDNVNSDVDYEAAINAAKILP</sequence>
<evidence type="ECO:0000255" key="1">
    <source>
        <dbReference type="HAMAP-Rule" id="MF_00269"/>
    </source>
</evidence>
<keyword id="KW-0049">Antioxidant</keyword>
<keyword id="KW-1015">Disulfide bond</keyword>
<keyword id="KW-0560">Oxidoreductase</keyword>
<keyword id="KW-0575">Peroxidase</keyword>
<keyword id="KW-0676">Redox-active center</keyword>
<keyword id="KW-1185">Reference proteome</keyword>
<name>TPX_STRA5</name>
<dbReference type="EC" id="1.11.1.24" evidence="1"/>
<dbReference type="EMBL" id="AE009948">
    <property type="protein sequence ID" value="AAN00013.1"/>
    <property type="molecule type" value="Genomic_DNA"/>
</dbReference>
<dbReference type="RefSeq" id="NP_688140.1">
    <property type="nucleotide sequence ID" value="NC_004116.1"/>
</dbReference>
<dbReference type="RefSeq" id="WP_000206525.1">
    <property type="nucleotide sequence ID" value="NC_004116.1"/>
</dbReference>
<dbReference type="SMR" id="Q8DZH0"/>
<dbReference type="STRING" id="208435.SAG1131"/>
<dbReference type="KEGG" id="sag:SAG1131"/>
<dbReference type="PATRIC" id="fig|208435.3.peg.1137"/>
<dbReference type="HOGENOM" id="CLU_042529_12_0_9"/>
<dbReference type="OrthoDB" id="9781543at2"/>
<dbReference type="Proteomes" id="UP000000821">
    <property type="component" value="Chromosome"/>
</dbReference>
<dbReference type="GO" id="GO:0008379">
    <property type="term" value="F:thioredoxin peroxidase activity"/>
    <property type="evidence" value="ECO:0007669"/>
    <property type="project" value="UniProtKB-UniRule"/>
</dbReference>
<dbReference type="CDD" id="cd03014">
    <property type="entry name" value="PRX_Atyp2cys"/>
    <property type="match status" value="1"/>
</dbReference>
<dbReference type="Gene3D" id="3.40.30.10">
    <property type="entry name" value="Glutaredoxin"/>
    <property type="match status" value="1"/>
</dbReference>
<dbReference type="HAMAP" id="MF_00269">
    <property type="entry name" value="Tpx"/>
    <property type="match status" value="1"/>
</dbReference>
<dbReference type="InterPro" id="IPR013740">
    <property type="entry name" value="Redoxin"/>
</dbReference>
<dbReference type="InterPro" id="IPR036249">
    <property type="entry name" value="Thioredoxin-like_sf"/>
</dbReference>
<dbReference type="InterPro" id="IPR013766">
    <property type="entry name" value="Thioredoxin_domain"/>
</dbReference>
<dbReference type="InterPro" id="IPR002065">
    <property type="entry name" value="TPX"/>
</dbReference>
<dbReference type="InterPro" id="IPR018219">
    <property type="entry name" value="Tpx_CS"/>
</dbReference>
<dbReference type="InterPro" id="IPR050455">
    <property type="entry name" value="Tpx_Peroxidase_subfamily"/>
</dbReference>
<dbReference type="NCBIfam" id="NF001808">
    <property type="entry name" value="PRK00522.1"/>
    <property type="match status" value="1"/>
</dbReference>
<dbReference type="PANTHER" id="PTHR43110">
    <property type="entry name" value="THIOL PEROXIDASE"/>
    <property type="match status" value="1"/>
</dbReference>
<dbReference type="PANTHER" id="PTHR43110:SF1">
    <property type="entry name" value="THIOL PEROXIDASE"/>
    <property type="match status" value="1"/>
</dbReference>
<dbReference type="Pfam" id="PF08534">
    <property type="entry name" value="Redoxin"/>
    <property type="match status" value="1"/>
</dbReference>
<dbReference type="SUPFAM" id="SSF52833">
    <property type="entry name" value="Thioredoxin-like"/>
    <property type="match status" value="1"/>
</dbReference>
<dbReference type="PROSITE" id="PS51352">
    <property type="entry name" value="THIOREDOXIN_2"/>
    <property type="match status" value="1"/>
</dbReference>
<dbReference type="PROSITE" id="PS01265">
    <property type="entry name" value="TPX"/>
    <property type="match status" value="1"/>
</dbReference>
<protein>
    <recommendedName>
        <fullName evidence="1">Thiol peroxidase</fullName>
        <shortName evidence="1">Tpx</shortName>
        <ecNumber evidence="1">1.11.1.24</ecNumber>
    </recommendedName>
    <alternativeName>
        <fullName evidence="1">Peroxiredoxin tpx</fullName>
        <shortName evidence="1">Prx</shortName>
    </alternativeName>
    <alternativeName>
        <fullName evidence="1">Thioredoxin peroxidase</fullName>
    </alternativeName>
    <alternativeName>
        <fullName evidence="1">Thioredoxin-dependent peroxiredoxin</fullName>
    </alternativeName>
</protein>
<organism>
    <name type="scientific">Streptococcus agalactiae serotype V (strain ATCC BAA-611 / 2603 V/R)</name>
    <dbReference type="NCBI Taxonomy" id="208435"/>
    <lineage>
        <taxon>Bacteria</taxon>
        <taxon>Bacillati</taxon>
        <taxon>Bacillota</taxon>
        <taxon>Bacilli</taxon>
        <taxon>Lactobacillales</taxon>
        <taxon>Streptococcaceae</taxon>
        <taxon>Streptococcus</taxon>
    </lineage>
</organism>
<feature type="chain" id="PRO_0000187909" description="Thiol peroxidase">
    <location>
        <begin position="1"/>
        <end position="164"/>
    </location>
</feature>
<feature type="domain" description="Thioredoxin" evidence="1">
    <location>
        <begin position="16"/>
        <end position="162"/>
    </location>
</feature>
<feature type="active site" description="Cysteine sulfenic acid (-SOH) intermediate" evidence="1">
    <location>
        <position position="58"/>
    </location>
</feature>
<feature type="disulfide bond" description="Redox-active" evidence="1">
    <location>
        <begin position="58"/>
        <end position="92"/>
    </location>
</feature>
<gene>
    <name evidence="1" type="primary">tpx</name>
    <name type="ordered locus">SAG1131</name>
</gene>